<name>GHRA_ENT38</name>
<dbReference type="EC" id="1.1.1.79" evidence="1"/>
<dbReference type="EC" id="1.1.1.81" evidence="1"/>
<dbReference type="EMBL" id="CP000653">
    <property type="protein sequence ID" value="ABP60228.1"/>
    <property type="molecule type" value="Genomic_DNA"/>
</dbReference>
<dbReference type="RefSeq" id="WP_012016945.1">
    <property type="nucleotide sequence ID" value="NC_009436.1"/>
</dbReference>
<dbReference type="SMR" id="A4W948"/>
<dbReference type="STRING" id="399742.Ent638_1549"/>
<dbReference type="KEGG" id="ent:Ent638_1549"/>
<dbReference type="eggNOG" id="COG0111">
    <property type="taxonomic scope" value="Bacteria"/>
</dbReference>
<dbReference type="HOGENOM" id="CLU_019796_1_0_6"/>
<dbReference type="OrthoDB" id="9787219at2"/>
<dbReference type="Proteomes" id="UP000000230">
    <property type="component" value="Chromosome"/>
</dbReference>
<dbReference type="GO" id="GO:0005737">
    <property type="term" value="C:cytoplasm"/>
    <property type="evidence" value="ECO:0007669"/>
    <property type="project" value="UniProtKB-SubCell"/>
</dbReference>
<dbReference type="GO" id="GO:0030267">
    <property type="term" value="F:glyoxylate reductase (NADPH) activity"/>
    <property type="evidence" value="ECO:0007669"/>
    <property type="project" value="UniProtKB-UniRule"/>
</dbReference>
<dbReference type="GO" id="GO:0008465">
    <property type="term" value="F:hydroxypyruvate reductase (NADH) activity"/>
    <property type="evidence" value="ECO:0007669"/>
    <property type="project" value="RHEA"/>
</dbReference>
<dbReference type="GO" id="GO:0120509">
    <property type="term" value="F:hydroxypyruvate reductase (NADPH) activity"/>
    <property type="evidence" value="ECO:0007669"/>
    <property type="project" value="RHEA"/>
</dbReference>
<dbReference type="GO" id="GO:0051287">
    <property type="term" value="F:NAD binding"/>
    <property type="evidence" value="ECO:0007669"/>
    <property type="project" value="InterPro"/>
</dbReference>
<dbReference type="CDD" id="cd12164">
    <property type="entry name" value="GDH_like_2"/>
    <property type="match status" value="1"/>
</dbReference>
<dbReference type="FunFam" id="3.40.50.720:FF:000110">
    <property type="entry name" value="Glyoxylate/hydroxypyruvate reductase A"/>
    <property type="match status" value="1"/>
</dbReference>
<dbReference type="Gene3D" id="3.40.50.720">
    <property type="entry name" value="NAD(P)-binding Rossmann-like Domain"/>
    <property type="match status" value="2"/>
</dbReference>
<dbReference type="HAMAP" id="MF_01666">
    <property type="entry name" value="2_Hacid_dh_C_GhrA"/>
    <property type="match status" value="1"/>
</dbReference>
<dbReference type="InterPro" id="IPR006140">
    <property type="entry name" value="D-isomer_DH_NAD-bd"/>
</dbReference>
<dbReference type="InterPro" id="IPR023514">
    <property type="entry name" value="GhrA_Enterobacterales"/>
</dbReference>
<dbReference type="InterPro" id="IPR036291">
    <property type="entry name" value="NAD(P)-bd_dom_sf"/>
</dbReference>
<dbReference type="NCBIfam" id="NF012013">
    <property type="entry name" value="PRK15469.1"/>
    <property type="match status" value="1"/>
</dbReference>
<dbReference type="PANTHER" id="PTHR43333">
    <property type="entry name" value="2-HACID_DH_C DOMAIN-CONTAINING PROTEIN"/>
    <property type="match status" value="1"/>
</dbReference>
<dbReference type="PANTHER" id="PTHR43333:SF1">
    <property type="entry name" value="D-ISOMER SPECIFIC 2-HYDROXYACID DEHYDROGENASE NAD-BINDING DOMAIN-CONTAINING PROTEIN"/>
    <property type="match status" value="1"/>
</dbReference>
<dbReference type="Pfam" id="PF02826">
    <property type="entry name" value="2-Hacid_dh_C"/>
    <property type="match status" value="1"/>
</dbReference>
<dbReference type="SUPFAM" id="SSF51735">
    <property type="entry name" value="NAD(P)-binding Rossmann-fold domains"/>
    <property type="match status" value="1"/>
</dbReference>
<reference key="1">
    <citation type="journal article" date="2010" name="PLoS Genet.">
        <title>Genome sequence of the plant growth promoting endophytic bacterium Enterobacter sp. 638.</title>
        <authorList>
            <person name="Taghavi S."/>
            <person name="van der Lelie D."/>
            <person name="Hoffman A."/>
            <person name="Zhang Y.B."/>
            <person name="Walla M.D."/>
            <person name="Vangronsveld J."/>
            <person name="Newman L."/>
            <person name="Monchy S."/>
        </authorList>
    </citation>
    <scope>NUCLEOTIDE SEQUENCE [LARGE SCALE GENOMIC DNA]</scope>
    <source>
        <strain>638</strain>
    </source>
</reference>
<evidence type="ECO:0000255" key="1">
    <source>
        <dbReference type="HAMAP-Rule" id="MF_01666"/>
    </source>
</evidence>
<keyword id="KW-0963">Cytoplasm</keyword>
<keyword id="KW-0520">NAD</keyword>
<keyword id="KW-0521">NADP</keyword>
<keyword id="KW-0560">Oxidoreductase</keyword>
<sequence length="312" mass="34929">MDIIFYHPTFDTPYWINALTAALPGARVREWKRGDNEHADYALVWHPPVEMLQGRDLKAVFALGAGVDSILSKLKAHPEMLPEHIPLFRLEDTGMGQQMQEYAVSQVLHWFRRFDDYQALKQKSHWEPLADYQREDFTIGILGAGVLGSKVAEALAPWGFPLRCWSRSRKTYPGVQSFAGADELPAFLKGTRVLINLLPNTAETVGIINKGLLNQLADESYLMNLARGVHVIEEDLIDALNTGKLKGAMLDVYSSEPLPVESPLWAHPRVAMTPHIAAVTRPAEAVAYIARTIEHLEQGKAATRQVNRQLGY</sequence>
<proteinExistence type="inferred from homology"/>
<feature type="chain" id="PRO_0000348363" description="Glyoxylate/hydroxypyruvate reductase A">
    <location>
        <begin position="1"/>
        <end position="312"/>
    </location>
</feature>
<feature type="active site" evidence="1">
    <location>
        <position position="227"/>
    </location>
</feature>
<feature type="active site" description="Proton donor" evidence="1">
    <location>
        <position position="275"/>
    </location>
</feature>
<accession>A4W948</accession>
<organism>
    <name type="scientific">Enterobacter sp. (strain 638)</name>
    <dbReference type="NCBI Taxonomy" id="399742"/>
    <lineage>
        <taxon>Bacteria</taxon>
        <taxon>Pseudomonadati</taxon>
        <taxon>Pseudomonadota</taxon>
        <taxon>Gammaproteobacteria</taxon>
        <taxon>Enterobacterales</taxon>
        <taxon>Enterobacteriaceae</taxon>
        <taxon>Enterobacter</taxon>
    </lineage>
</organism>
<comment type="function">
    <text evidence="1">Catalyzes the NADPH-dependent reduction of glyoxylate and hydroxypyruvate into glycolate and glycerate, respectively.</text>
</comment>
<comment type="catalytic activity">
    <reaction evidence="1">
        <text>glycolate + NADP(+) = glyoxylate + NADPH + H(+)</text>
        <dbReference type="Rhea" id="RHEA:10992"/>
        <dbReference type="ChEBI" id="CHEBI:15378"/>
        <dbReference type="ChEBI" id="CHEBI:29805"/>
        <dbReference type="ChEBI" id="CHEBI:36655"/>
        <dbReference type="ChEBI" id="CHEBI:57783"/>
        <dbReference type="ChEBI" id="CHEBI:58349"/>
        <dbReference type="EC" id="1.1.1.79"/>
    </reaction>
</comment>
<comment type="catalytic activity">
    <reaction evidence="1">
        <text>(R)-glycerate + NAD(+) = 3-hydroxypyruvate + NADH + H(+)</text>
        <dbReference type="Rhea" id="RHEA:17905"/>
        <dbReference type="ChEBI" id="CHEBI:15378"/>
        <dbReference type="ChEBI" id="CHEBI:16659"/>
        <dbReference type="ChEBI" id="CHEBI:17180"/>
        <dbReference type="ChEBI" id="CHEBI:57540"/>
        <dbReference type="ChEBI" id="CHEBI:57945"/>
        <dbReference type="EC" id="1.1.1.81"/>
    </reaction>
</comment>
<comment type="catalytic activity">
    <reaction evidence="1">
        <text>(R)-glycerate + NADP(+) = 3-hydroxypyruvate + NADPH + H(+)</text>
        <dbReference type="Rhea" id="RHEA:18657"/>
        <dbReference type="ChEBI" id="CHEBI:15378"/>
        <dbReference type="ChEBI" id="CHEBI:16659"/>
        <dbReference type="ChEBI" id="CHEBI:17180"/>
        <dbReference type="ChEBI" id="CHEBI:57783"/>
        <dbReference type="ChEBI" id="CHEBI:58349"/>
        <dbReference type="EC" id="1.1.1.81"/>
    </reaction>
</comment>
<comment type="subcellular location">
    <subcellularLocation>
        <location evidence="1">Cytoplasm</location>
    </subcellularLocation>
</comment>
<comment type="similarity">
    <text evidence="1">Belongs to the D-isomer specific 2-hydroxyacid dehydrogenase family. GhrA subfamily.</text>
</comment>
<gene>
    <name evidence="1" type="primary">ghrA</name>
    <name type="ordered locus">Ent638_1549</name>
</gene>
<protein>
    <recommendedName>
        <fullName evidence="1">Glyoxylate/hydroxypyruvate reductase A</fullName>
        <ecNumber evidence="1">1.1.1.79</ecNumber>
        <ecNumber evidence="1">1.1.1.81</ecNumber>
    </recommendedName>
    <alternativeName>
        <fullName evidence="1">2-ketoacid reductase</fullName>
    </alternativeName>
</protein>